<name>RPOC_GEOMG</name>
<comment type="function">
    <text evidence="1">DNA-dependent RNA polymerase catalyzes the transcription of DNA into RNA using the four ribonucleoside triphosphates as substrates.</text>
</comment>
<comment type="catalytic activity">
    <reaction evidence="1">
        <text>RNA(n) + a ribonucleoside 5'-triphosphate = RNA(n+1) + diphosphate</text>
        <dbReference type="Rhea" id="RHEA:21248"/>
        <dbReference type="Rhea" id="RHEA-COMP:14527"/>
        <dbReference type="Rhea" id="RHEA-COMP:17342"/>
        <dbReference type="ChEBI" id="CHEBI:33019"/>
        <dbReference type="ChEBI" id="CHEBI:61557"/>
        <dbReference type="ChEBI" id="CHEBI:140395"/>
        <dbReference type="EC" id="2.7.7.6"/>
    </reaction>
</comment>
<comment type="cofactor">
    <cofactor evidence="1">
        <name>Mg(2+)</name>
        <dbReference type="ChEBI" id="CHEBI:18420"/>
    </cofactor>
    <text evidence="1">Binds 1 Mg(2+) ion per subunit.</text>
</comment>
<comment type="cofactor">
    <cofactor evidence="1">
        <name>Zn(2+)</name>
        <dbReference type="ChEBI" id="CHEBI:29105"/>
    </cofactor>
    <text evidence="1">Binds 2 Zn(2+) ions per subunit.</text>
</comment>
<comment type="subunit">
    <text evidence="1">The RNAP catalytic core consists of 2 alpha, 1 beta, 1 beta' and 1 omega subunit. When a sigma factor is associated with the core the holoenzyme is formed, which can initiate transcription.</text>
</comment>
<comment type="similarity">
    <text evidence="1">Belongs to the RNA polymerase beta' chain family.</text>
</comment>
<proteinExistence type="inferred from homology"/>
<sequence>MEDFFSFFDKPKDPLHFSAIRISVSSPEKIRERSFGEVKKPETINYRTFKPERDGLFCAKIFGPTKDYECNCGKYKRMKHRGIVCEKCGVEVIPSKVRRERLGHIDLATPVAHIWFLKSLPSRIGNLLDISLKDLEKVLYFEAYAVTDPKNTGMAMAEVLSEDRYLKALEEHNYQFEAGMGAAAIRDCLKAIDLDQLAEQLRQEMIEATSEAKRKKTAKRLKVVEAFKESGNRPEWMILECIPVLPPELRPLVPLDGGRFATSDLNDLYRRVINRNNRLKRLMELQAPEVIIRNEKRMLQEAVDALFDNGRRGRAIAGPNKRPLKSLSDMLKGKSGRFRQNLLGKRVDYSGRSVIVVGPELRLHQCGLPKKMALELFKPFIYNKLEERGFVTTIKSAKKMVEKERPEVWDVLEEVIKEHPVMLNRAPTLHRLGIQAFEPVLIEGKAIQLHPLVCTAFNADFDGDQMAVHLPLSIESQVEARVLMMSTNNILSPAHGKPIIVPSQDMVLGIYYMTRERHFAKGDGKIFASPEEVRIAYDAGEVDLQARISVRMKNILSAASEQPAIIETTVGRILLREILPEMVPFSSINKVMSKKELVNLIDVCYRLAGNKETVILADRLKETGFRYSTLAGISICMNDMVIPEGKSAIIDSANDEVKEIQNQYTEGLITDGERYNKVIDIWAKATEDIAKQMLDNLSKDTILSPDGQEVKIPSFNAIHMMADSGARGSAQQIRQLAGMRGLMAKPSGEIIETPITANFREGLNVLQYFISTHGARKGLADTALKTANSGYLTRRLVDVAQDAIITETDCGTLDGLTVTSLTEGGEVIEQIGDRILGRVALDDILDPVTGDVLVPANQEIDETLVKRIEDAGIERVKIRSVLTCQSRRGICAKCYGRDLARGHIVNMGEAVGVIAAQSIGEPGTQLTMRTFHIGGTASRHAEQTSLEARTEGRVKFININSVVNIEGHHIVMNRNGEVAIIDETGREREKYGIVYGAKIKFGPDQVVKPGETLAEWDPYTMPILTEVAGRVKFGDIVEGVTMEEQLDEVTGLSRKVIIESRDADKRPRIAIKASDPESASGGSTIGRYYLPVGANISVAEDSFVNAGDVIAKIPRETTKTKDITGGLPRVAELFEARKPKDFAVITEIDGVVTFGKDAKGKRKVIVTPELGEPKEYLIPKGKHISVHENDYVRAGEPLMDGSSNPHDILRVLGIKELAKYLVDEVQEVYRLQGVKINDKHIETIVRQMLRRVRIKEVGDTNLLIDDQLERWVFEEENERVIAKGGRPAIAEPLLLGITKASLSTESFISAASFQETTKVLTQAAIEGKVDQLRGLKENVIMGRLIPAGTGLSRYRNLKLVAEQAELLEPVAVAPPAVEEDYPEDDMLDDIEE</sequence>
<protein>
    <recommendedName>
        <fullName evidence="1">DNA-directed RNA polymerase subunit beta'</fullName>
        <shortName evidence="1">RNAP subunit beta'</shortName>
        <ecNumber evidence="1">2.7.7.6</ecNumber>
    </recommendedName>
    <alternativeName>
        <fullName evidence="1">RNA polymerase subunit beta'</fullName>
    </alternativeName>
    <alternativeName>
        <fullName evidence="1">Transcriptase subunit beta'</fullName>
    </alternativeName>
</protein>
<reference key="1">
    <citation type="journal article" date="2009" name="BMC Microbiol.">
        <title>The genome sequence of Geobacter metallireducens: features of metabolism, physiology and regulation common and dissimilar to Geobacter sulfurreducens.</title>
        <authorList>
            <person name="Aklujkar M."/>
            <person name="Krushkal J."/>
            <person name="DiBartolo G."/>
            <person name="Lapidus A."/>
            <person name="Land M.L."/>
            <person name="Lovley D.R."/>
        </authorList>
    </citation>
    <scope>NUCLEOTIDE SEQUENCE [LARGE SCALE GENOMIC DNA]</scope>
    <source>
        <strain>ATCC 53774 / DSM 7210 / GS-15</strain>
    </source>
</reference>
<feature type="chain" id="PRO_0000240804" description="DNA-directed RNA polymerase subunit beta'">
    <location>
        <begin position="1"/>
        <end position="1392"/>
    </location>
</feature>
<feature type="binding site" evidence="1">
    <location>
        <position position="70"/>
    </location>
    <ligand>
        <name>Zn(2+)</name>
        <dbReference type="ChEBI" id="CHEBI:29105"/>
        <label>1</label>
    </ligand>
</feature>
<feature type="binding site" evidence="1">
    <location>
        <position position="72"/>
    </location>
    <ligand>
        <name>Zn(2+)</name>
        <dbReference type="ChEBI" id="CHEBI:29105"/>
        <label>1</label>
    </ligand>
</feature>
<feature type="binding site" evidence="1">
    <location>
        <position position="85"/>
    </location>
    <ligand>
        <name>Zn(2+)</name>
        <dbReference type="ChEBI" id="CHEBI:29105"/>
        <label>1</label>
    </ligand>
</feature>
<feature type="binding site" evidence="1">
    <location>
        <position position="88"/>
    </location>
    <ligand>
        <name>Zn(2+)</name>
        <dbReference type="ChEBI" id="CHEBI:29105"/>
        <label>1</label>
    </ligand>
</feature>
<feature type="binding site" evidence="1">
    <location>
        <position position="460"/>
    </location>
    <ligand>
        <name>Mg(2+)</name>
        <dbReference type="ChEBI" id="CHEBI:18420"/>
    </ligand>
</feature>
<feature type="binding site" evidence="1">
    <location>
        <position position="462"/>
    </location>
    <ligand>
        <name>Mg(2+)</name>
        <dbReference type="ChEBI" id="CHEBI:18420"/>
    </ligand>
</feature>
<feature type="binding site" evidence="1">
    <location>
        <position position="464"/>
    </location>
    <ligand>
        <name>Mg(2+)</name>
        <dbReference type="ChEBI" id="CHEBI:18420"/>
    </ligand>
</feature>
<feature type="binding site" evidence="1">
    <location>
        <position position="810"/>
    </location>
    <ligand>
        <name>Zn(2+)</name>
        <dbReference type="ChEBI" id="CHEBI:29105"/>
        <label>2</label>
    </ligand>
</feature>
<feature type="binding site" evidence="1">
    <location>
        <position position="884"/>
    </location>
    <ligand>
        <name>Zn(2+)</name>
        <dbReference type="ChEBI" id="CHEBI:29105"/>
        <label>2</label>
    </ligand>
</feature>
<feature type="binding site" evidence="1">
    <location>
        <position position="891"/>
    </location>
    <ligand>
        <name>Zn(2+)</name>
        <dbReference type="ChEBI" id="CHEBI:29105"/>
        <label>2</label>
    </ligand>
</feature>
<feature type="binding site" evidence="1">
    <location>
        <position position="894"/>
    </location>
    <ligand>
        <name>Zn(2+)</name>
        <dbReference type="ChEBI" id="CHEBI:29105"/>
        <label>2</label>
    </ligand>
</feature>
<gene>
    <name evidence="1" type="primary">rpoC</name>
    <name type="ordered locus">Gmet_0620</name>
</gene>
<dbReference type="EC" id="2.7.7.6" evidence="1"/>
<dbReference type="EMBL" id="CP000148">
    <property type="protein sequence ID" value="ABB30862.1"/>
    <property type="molecule type" value="Genomic_DNA"/>
</dbReference>
<dbReference type="RefSeq" id="WP_004514636.1">
    <property type="nucleotide sequence ID" value="NC_007517.1"/>
</dbReference>
<dbReference type="SMR" id="Q39Y12"/>
<dbReference type="STRING" id="269799.Gmet_0620"/>
<dbReference type="KEGG" id="gme:Gmet_0620"/>
<dbReference type="eggNOG" id="COG0086">
    <property type="taxonomic scope" value="Bacteria"/>
</dbReference>
<dbReference type="HOGENOM" id="CLU_000524_3_1_7"/>
<dbReference type="Proteomes" id="UP000007073">
    <property type="component" value="Chromosome"/>
</dbReference>
<dbReference type="GO" id="GO:0000428">
    <property type="term" value="C:DNA-directed RNA polymerase complex"/>
    <property type="evidence" value="ECO:0007669"/>
    <property type="project" value="UniProtKB-KW"/>
</dbReference>
<dbReference type="GO" id="GO:0003677">
    <property type="term" value="F:DNA binding"/>
    <property type="evidence" value="ECO:0007669"/>
    <property type="project" value="UniProtKB-UniRule"/>
</dbReference>
<dbReference type="GO" id="GO:0003899">
    <property type="term" value="F:DNA-directed RNA polymerase activity"/>
    <property type="evidence" value="ECO:0007669"/>
    <property type="project" value="UniProtKB-UniRule"/>
</dbReference>
<dbReference type="GO" id="GO:0000287">
    <property type="term" value="F:magnesium ion binding"/>
    <property type="evidence" value="ECO:0007669"/>
    <property type="project" value="UniProtKB-UniRule"/>
</dbReference>
<dbReference type="GO" id="GO:0008270">
    <property type="term" value="F:zinc ion binding"/>
    <property type="evidence" value="ECO:0007669"/>
    <property type="project" value="UniProtKB-UniRule"/>
</dbReference>
<dbReference type="GO" id="GO:0006351">
    <property type="term" value="P:DNA-templated transcription"/>
    <property type="evidence" value="ECO:0007669"/>
    <property type="project" value="UniProtKB-UniRule"/>
</dbReference>
<dbReference type="CDD" id="cd02655">
    <property type="entry name" value="RNAP_beta'_C"/>
    <property type="match status" value="1"/>
</dbReference>
<dbReference type="CDD" id="cd01609">
    <property type="entry name" value="RNAP_beta'_N"/>
    <property type="match status" value="1"/>
</dbReference>
<dbReference type="FunFam" id="1.10.132.30:FF:000003">
    <property type="entry name" value="DNA-directed RNA polymerase subunit beta"/>
    <property type="match status" value="1"/>
</dbReference>
<dbReference type="FunFam" id="1.10.150.390:FF:000002">
    <property type="entry name" value="DNA-directed RNA polymerase subunit beta"/>
    <property type="match status" value="1"/>
</dbReference>
<dbReference type="FunFam" id="1.10.40.90:FF:000001">
    <property type="entry name" value="DNA-directed RNA polymerase subunit beta"/>
    <property type="match status" value="1"/>
</dbReference>
<dbReference type="Gene3D" id="1.10.132.30">
    <property type="match status" value="1"/>
</dbReference>
<dbReference type="Gene3D" id="1.10.150.390">
    <property type="match status" value="1"/>
</dbReference>
<dbReference type="Gene3D" id="1.10.1790.20">
    <property type="match status" value="1"/>
</dbReference>
<dbReference type="Gene3D" id="1.10.40.90">
    <property type="match status" value="1"/>
</dbReference>
<dbReference type="Gene3D" id="2.40.40.20">
    <property type="match status" value="1"/>
</dbReference>
<dbReference type="Gene3D" id="2.40.50.100">
    <property type="match status" value="3"/>
</dbReference>
<dbReference type="Gene3D" id="4.10.860.120">
    <property type="entry name" value="RNA polymerase II, clamp domain"/>
    <property type="match status" value="1"/>
</dbReference>
<dbReference type="Gene3D" id="1.10.274.100">
    <property type="entry name" value="RNA polymerase Rpb1, domain 3"/>
    <property type="match status" value="2"/>
</dbReference>
<dbReference type="HAMAP" id="MF_01322">
    <property type="entry name" value="RNApol_bact_RpoC"/>
    <property type="match status" value="1"/>
</dbReference>
<dbReference type="InterPro" id="IPR045867">
    <property type="entry name" value="DNA-dir_RpoC_beta_prime"/>
</dbReference>
<dbReference type="InterPro" id="IPR012754">
    <property type="entry name" value="DNA-dir_RpoC_beta_prime_bact"/>
</dbReference>
<dbReference type="InterPro" id="IPR000722">
    <property type="entry name" value="RNA_pol_asu"/>
</dbReference>
<dbReference type="InterPro" id="IPR006592">
    <property type="entry name" value="RNA_pol_N"/>
</dbReference>
<dbReference type="InterPro" id="IPR007080">
    <property type="entry name" value="RNA_pol_Rpb1_1"/>
</dbReference>
<dbReference type="InterPro" id="IPR007066">
    <property type="entry name" value="RNA_pol_Rpb1_3"/>
</dbReference>
<dbReference type="InterPro" id="IPR042102">
    <property type="entry name" value="RNA_pol_Rpb1_3_sf"/>
</dbReference>
<dbReference type="InterPro" id="IPR007083">
    <property type="entry name" value="RNA_pol_Rpb1_4"/>
</dbReference>
<dbReference type="InterPro" id="IPR007081">
    <property type="entry name" value="RNA_pol_Rpb1_5"/>
</dbReference>
<dbReference type="InterPro" id="IPR044893">
    <property type="entry name" value="RNA_pol_Rpb1_clamp_domain"/>
</dbReference>
<dbReference type="InterPro" id="IPR038120">
    <property type="entry name" value="Rpb1_funnel_sf"/>
</dbReference>
<dbReference type="NCBIfam" id="TIGR02386">
    <property type="entry name" value="rpoC_TIGR"/>
    <property type="match status" value="1"/>
</dbReference>
<dbReference type="PANTHER" id="PTHR19376">
    <property type="entry name" value="DNA-DIRECTED RNA POLYMERASE"/>
    <property type="match status" value="1"/>
</dbReference>
<dbReference type="PANTHER" id="PTHR19376:SF54">
    <property type="entry name" value="DNA-DIRECTED RNA POLYMERASE SUBUNIT BETA"/>
    <property type="match status" value="1"/>
</dbReference>
<dbReference type="Pfam" id="PF04997">
    <property type="entry name" value="RNA_pol_Rpb1_1"/>
    <property type="match status" value="1"/>
</dbReference>
<dbReference type="Pfam" id="PF00623">
    <property type="entry name" value="RNA_pol_Rpb1_2"/>
    <property type="match status" value="1"/>
</dbReference>
<dbReference type="Pfam" id="PF04983">
    <property type="entry name" value="RNA_pol_Rpb1_3"/>
    <property type="match status" value="1"/>
</dbReference>
<dbReference type="Pfam" id="PF05000">
    <property type="entry name" value="RNA_pol_Rpb1_4"/>
    <property type="match status" value="1"/>
</dbReference>
<dbReference type="Pfam" id="PF04998">
    <property type="entry name" value="RNA_pol_Rpb1_5"/>
    <property type="match status" value="1"/>
</dbReference>
<dbReference type="SMART" id="SM00663">
    <property type="entry name" value="RPOLA_N"/>
    <property type="match status" value="1"/>
</dbReference>
<dbReference type="SUPFAM" id="SSF64484">
    <property type="entry name" value="beta and beta-prime subunits of DNA dependent RNA-polymerase"/>
    <property type="match status" value="1"/>
</dbReference>
<accession>Q39Y12</accession>
<organism>
    <name type="scientific">Geobacter metallireducens (strain ATCC 53774 / DSM 7210 / GS-15)</name>
    <dbReference type="NCBI Taxonomy" id="269799"/>
    <lineage>
        <taxon>Bacteria</taxon>
        <taxon>Pseudomonadati</taxon>
        <taxon>Thermodesulfobacteriota</taxon>
        <taxon>Desulfuromonadia</taxon>
        <taxon>Geobacterales</taxon>
        <taxon>Geobacteraceae</taxon>
        <taxon>Geobacter</taxon>
    </lineage>
</organism>
<keyword id="KW-0240">DNA-directed RNA polymerase</keyword>
<keyword id="KW-0460">Magnesium</keyword>
<keyword id="KW-0479">Metal-binding</keyword>
<keyword id="KW-0548">Nucleotidyltransferase</keyword>
<keyword id="KW-1185">Reference proteome</keyword>
<keyword id="KW-0804">Transcription</keyword>
<keyword id="KW-0808">Transferase</keyword>
<keyword id="KW-0862">Zinc</keyword>
<evidence type="ECO:0000255" key="1">
    <source>
        <dbReference type="HAMAP-Rule" id="MF_01322"/>
    </source>
</evidence>